<feature type="chain" id="PRO_0000186288" description="Mitogen-activated protein kinase 13">
    <location>
        <begin position="1"/>
        <end position="365"/>
    </location>
</feature>
<feature type="domain" description="Protein kinase" evidence="3">
    <location>
        <begin position="25"/>
        <end position="308"/>
    </location>
</feature>
<feature type="short sequence motif" description="TXY">
    <location>
        <begin position="180"/>
        <end position="182"/>
    </location>
</feature>
<feature type="active site" description="Proton acceptor" evidence="3">
    <location>
        <position position="150"/>
    </location>
</feature>
<feature type="binding site" evidence="3">
    <location>
        <begin position="31"/>
        <end position="39"/>
    </location>
    <ligand>
        <name>ATP</name>
        <dbReference type="ChEBI" id="CHEBI:30616"/>
    </ligand>
</feature>
<feature type="binding site" evidence="3">
    <location>
        <position position="54"/>
    </location>
    <ligand>
        <name>ATP</name>
        <dbReference type="ChEBI" id="CHEBI:30616"/>
    </ligand>
</feature>
<feature type="modified residue" description="Phosphoserine" evidence="2">
    <location>
        <position position="47"/>
    </location>
</feature>
<feature type="modified residue" description="Phosphothreonine; by MAP2K3, MAP2K4, MAP2K6 and MAP2K7" evidence="2">
    <location>
        <position position="180"/>
    </location>
</feature>
<feature type="modified residue" description="Phosphotyrosine; by MAP2K3, MAP2K4, MAP2K6 and MAP2K7" evidence="2">
    <location>
        <position position="182"/>
    </location>
</feature>
<feature type="modified residue" description="Phosphoserine" evidence="2">
    <location>
        <position position="350"/>
    </location>
</feature>
<protein>
    <recommendedName>
        <fullName>Mitogen-activated protein kinase 13</fullName>
        <shortName>MAP kinase 13</shortName>
        <shortName>MAPK 13</shortName>
        <ecNumber>2.7.11.24</ecNumber>
    </recommendedName>
    <alternativeName>
        <fullName>Stress-activated protein kinase 4</fullName>
    </alternativeName>
</protein>
<name>MK13_PANTR</name>
<accession>Q9N272</accession>
<comment type="function">
    <text evidence="1">Serine/threonine kinase which acts as an essential component of the MAP kinase signal transduction pathway. MAPK13 is one of the four p38 MAPKs which play an important role in the cascades of cellular responses evoked by extracellular stimuli such as pro-inflammatory cytokines or physical stress leading to direct activation of transcription factors such as ELK1 and ATF2. Accordingly, p38 MAPKs phosphorylate a broad range of proteins and it has been estimated that they may have approximately 200 to 300 substrates each. MAPK13 is one of the less studied p38 MAPK isoforms. Some of the targets are downstream kinases such as MAPKAPK2, which are activated through phosphorylation and further phosphorylate additional targets. Plays a role in the regulation of protein translation by phosphorylating and inactivating EEF2K. Involved in cytoskeletal remodeling through phosphorylation of MAPT and STMN1. Mediates UV irradiation induced up-regulation of the gene expression of CXCL14. Plays an important role in the regulation of epidermal keratinocyte differentiation, apoptosis and skin tumor development. Phosphorylates the transcriptional activator MYB in response to stress which leads to rapid MYB degradation via a proteasome-dependent pathway. MAPK13 also phosphorylates and down-regulates PRKD1 during regulation of insulin secretion in pancreatic beta cells (By similarity).</text>
</comment>
<comment type="catalytic activity">
    <reaction>
        <text>L-seryl-[protein] + ATP = O-phospho-L-seryl-[protein] + ADP + H(+)</text>
        <dbReference type="Rhea" id="RHEA:17989"/>
        <dbReference type="Rhea" id="RHEA-COMP:9863"/>
        <dbReference type="Rhea" id="RHEA-COMP:11604"/>
        <dbReference type="ChEBI" id="CHEBI:15378"/>
        <dbReference type="ChEBI" id="CHEBI:29999"/>
        <dbReference type="ChEBI" id="CHEBI:30616"/>
        <dbReference type="ChEBI" id="CHEBI:83421"/>
        <dbReference type="ChEBI" id="CHEBI:456216"/>
        <dbReference type="EC" id="2.7.11.24"/>
    </reaction>
</comment>
<comment type="catalytic activity">
    <reaction>
        <text>L-threonyl-[protein] + ATP = O-phospho-L-threonyl-[protein] + ADP + H(+)</text>
        <dbReference type="Rhea" id="RHEA:46608"/>
        <dbReference type="Rhea" id="RHEA-COMP:11060"/>
        <dbReference type="Rhea" id="RHEA-COMP:11605"/>
        <dbReference type="ChEBI" id="CHEBI:15378"/>
        <dbReference type="ChEBI" id="CHEBI:30013"/>
        <dbReference type="ChEBI" id="CHEBI:30616"/>
        <dbReference type="ChEBI" id="CHEBI:61977"/>
        <dbReference type="ChEBI" id="CHEBI:456216"/>
        <dbReference type="EC" id="2.7.11.24"/>
    </reaction>
</comment>
<comment type="cofactor">
    <cofactor evidence="1">
        <name>Mg(2+)</name>
        <dbReference type="ChEBI" id="CHEBI:18420"/>
    </cofactor>
</comment>
<comment type="activity regulation">
    <text evidence="1">Activated by phosphorylation on threonine and tyrosine by dual specificity kinases, MAP2K3/MKK3, MAP2K6/MKK6, MAP2K4/MKK4 and MAP2K7/MKK7. Activation by ultraviolet radiation, hyperosmotic shock, anisomycin or by TNF-alpha is mediated by MAP2K3/MKK3. Inhibited by dual specificity phosphatase DUSP1 (By similarity).</text>
</comment>
<comment type="subunit">
    <text evidence="1">Interacts with MAPK8IP2.</text>
</comment>
<comment type="domain">
    <text>The TXY motif contains the threonine and tyrosine residues whose phosphorylation activates the MAP kinases.</text>
</comment>
<comment type="PTM">
    <text evidence="1">Dually phosphorylated on Thr-180 and Tyr-182 by MAP2K3/MKK3, MAP2K4/MKK4, MAP2K6/MKK6 and MAP2K7/MKK7, which activates the enzyme. Dephosphorylated by dual specificity phosphatase DUSP1 (By similarity).</text>
</comment>
<comment type="similarity">
    <text evidence="4">Belongs to the protein kinase superfamily. CMGC Ser/Thr protein kinase family. MAP kinase subfamily.</text>
</comment>
<sequence length="365" mass="42109">MSLIRKKGFYKQDVNKXXXELXKTYVSPTHVGSGAYGSVCSAIDKRSGEKVAIKKLSRPFQSEIFAKRAYRELLLLKHMQHENVIGLLDVFTPASSLRNFHDFYLVMXFMQTDLQKIMXMEFSEEKIQYLVYQMLKGLKYIHSAGVVHRDLKPGNLAVNEDCELKILDFGLARHADAEMTGYVVTRWYRAPEVILSWMHYNQTVDIWSVGCIMAEMLTGKTLFKGKDYLDQLTQILKVTGVPGTEFVQKLNDXAAKSYIQSLPQTPRKDFTQLFPRASPQAADLLEKMLELDVDKRLTAAQALTHPFFEPFRDPEEETEAQQPFDDSLEHEKLTVDEWKQHIYKEIVNFSPIARKDSRRRXGXKL</sequence>
<dbReference type="EC" id="2.7.11.24"/>
<dbReference type="EMBL" id="AF100547">
    <property type="protein sequence ID" value="AAF36773.1"/>
    <property type="molecule type" value="mRNA"/>
</dbReference>
<dbReference type="RefSeq" id="NP_001029261.2">
    <property type="nucleotide sequence ID" value="NM_001034089.2"/>
</dbReference>
<dbReference type="FunCoup" id="Q9N272">
    <property type="interactions" value="2377"/>
</dbReference>
<dbReference type="STRING" id="9598.ENSPTRP00000082859"/>
<dbReference type="PaxDb" id="9598-ENSPTRP00000030916"/>
<dbReference type="GeneID" id="462644"/>
<dbReference type="KEGG" id="ptr:462644"/>
<dbReference type="CTD" id="5603"/>
<dbReference type="eggNOG" id="KOG0660">
    <property type="taxonomic scope" value="Eukaryota"/>
</dbReference>
<dbReference type="InParanoid" id="Q9N272"/>
<dbReference type="OrthoDB" id="4168at9604"/>
<dbReference type="BRENDA" id="2.7.11.24">
    <property type="organism ID" value="4497"/>
</dbReference>
<dbReference type="Proteomes" id="UP000002277">
    <property type="component" value="Unplaced"/>
</dbReference>
<dbReference type="GO" id="GO:0005737">
    <property type="term" value="C:cytoplasm"/>
    <property type="evidence" value="ECO:0000318"/>
    <property type="project" value="GO_Central"/>
</dbReference>
<dbReference type="GO" id="GO:0005634">
    <property type="term" value="C:nucleus"/>
    <property type="evidence" value="ECO:0000318"/>
    <property type="project" value="GO_Central"/>
</dbReference>
<dbReference type="GO" id="GO:0005524">
    <property type="term" value="F:ATP binding"/>
    <property type="evidence" value="ECO:0007669"/>
    <property type="project" value="UniProtKB-KW"/>
</dbReference>
<dbReference type="GO" id="GO:0004707">
    <property type="term" value="F:MAP kinase activity"/>
    <property type="evidence" value="ECO:0000250"/>
    <property type="project" value="UniProtKB"/>
</dbReference>
<dbReference type="GO" id="GO:0106310">
    <property type="term" value="F:protein serine kinase activity"/>
    <property type="evidence" value="ECO:0007669"/>
    <property type="project" value="RHEA"/>
</dbReference>
<dbReference type="GO" id="GO:0004674">
    <property type="term" value="F:protein serine/threonine kinase activity"/>
    <property type="evidence" value="ECO:0000318"/>
    <property type="project" value="GO_Central"/>
</dbReference>
<dbReference type="GO" id="GO:0035556">
    <property type="term" value="P:intracellular signal transduction"/>
    <property type="evidence" value="ECO:0000318"/>
    <property type="project" value="GO_Central"/>
</dbReference>
<dbReference type="GO" id="GO:0051403">
    <property type="term" value="P:stress-activated MAPK cascade"/>
    <property type="evidence" value="ECO:0000250"/>
    <property type="project" value="UniProtKB"/>
</dbReference>
<dbReference type="CDD" id="cd07879">
    <property type="entry name" value="STKc_p38delta"/>
    <property type="match status" value="1"/>
</dbReference>
<dbReference type="FunFam" id="1.10.510.10:FF:000170">
    <property type="entry name" value="Mitogen-activated protein kinase"/>
    <property type="match status" value="1"/>
</dbReference>
<dbReference type="FunFam" id="3.30.200.20:FF:000769">
    <property type="entry name" value="Mitogen-activated protein kinase 14"/>
    <property type="match status" value="1"/>
</dbReference>
<dbReference type="Gene3D" id="3.30.200.20">
    <property type="entry name" value="Phosphorylase Kinase, domain 1"/>
    <property type="match status" value="1"/>
</dbReference>
<dbReference type="Gene3D" id="1.10.510.10">
    <property type="entry name" value="Transferase(Phosphotransferase) domain 1"/>
    <property type="match status" value="1"/>
</dbReference>
<dbReference type="InterPro" id="IPR011009">
    <property type="entry name" value="Kinase-like_dom_sf"/>
</dbReference>
<dbReference type="InterPro" id="IPR050117">
    <property type="entry name" value="MAP_kinase"/>
</dbReference>
<dbReference type="InterPro" id="IPR003527">
    <property type="entry name" value="MAP_kinase_CS"/>
</dbReference>
<dbReference type="InterPro" id="IPR038785">
    <property type="entry name" value="MAPK13"/>
</dbReference>
<dbReference type="InterPro" id="IPR008352">
    <property type="entry name" value="MAPK_p38-like"/>
</dbReference>
<dbReference type="InterPro" id="IPR000719">
    <property type="entry name" value="Prot_kinase_dom"/>
</dbReference>
<dbReference type="InterPro" id="IPR017441">
    <property type="entry name" value="Protein_kinase_ATP_BS"/>
</dbReference>
<dbReference type="PANTHER" id="PTHR24055">
    <property type="entry name" value="MITOGEN-ACTIVATED PROTEIN KINASE"/>
    <property type="match status" value="1"/>
</dbReference>
<dbReference type="Pfam" id="PF00069">
    <property type="entry name" value="Pkinase"/>
    <property type="match status" value="1"/>
</dbReference>
<dbReference type="PRINTS" id="PR01773">
    <property type="entry name" value="P38MAPKINASE"/>
</dbReference>
<dbReference type="SMART" id="SM00220">
    <property type="entry name" value="S_TKc"/>
    <property type="match status" value="1"/>
</dbReference>
<dbReference type="SUPFAM" id="SSF56112">
    <property type="entry name" value="Protein kinase-like (PK-like)"/>
    <property type="match status" value="1"/>
</dbReference>
<dbReference type="PROSITE" id="PS01351">
    <property type="entry name" value="MAPK"/>
    <property type="match status" value="1"/>
</dbReference>
<dbReference type="PROSITE" id="PS00107">
    <property type="entry name" value="PROTEIN_KINASE_ATP"/>
    <property type="match status" value="1"/>
</dbReference>
<dbReference type="PROSITE" id="PS50011">
    <property type="entry name" value="PROTEIN_KINASE_DOM"/>
    <property type="match status" value="1"/>
</dbReference>
<proteinExistence type="evidence at transcript level"/>
<gene>
    <name type="primary">MAPK13</name>
    <name type="synonym">SAPK4</name>
</gene>
<keyword id="KW-0067">ATP-binding</keyword>
<keyword id="KW-0131">Cell cycle</keyword>
<keyword id="KW-0418">Kinase</keyword>
<keyword id="KW-0547">Nucleotide-binding</keyword>
<keyword id="KW-0597">Phosphoprotein</keyword>
<keyword id="KW-1185">Reference proteome</keyword>
<keyword id="KW-0723">Serine/threonine-protein kinase</keyword>
<keyword id="KW-0346">Stress response</keyword>
<keyword id="KW-0804">Transcription</keyword>
<keyword id="KW-0805">Transcription regulation</keyword>
<keyword id="KW-0808">Transferase</keyword>
<evidence type="ECO:0000250" key="1"/>
<evidence type="ECO:0000250" key="2">
    <source>
        <dbReference type="UniProtKB" id="O15264"/>
    </source>
</evidence>
<evidence type="ECO:0000255" key="3">
    <source>
        <dbReference type="PROSITE-ProRule" id="PRU00159"/>
    </source>
</evidence>
<evidence type="ECO:0000305" key="4"/>
<reference key="1">
    <citation type="journal article" date="1999" name="DNA Seq.">
        <title>Structure and polymorphism of two stress-activated protein kinase genes centromeric of the MHC: SAPK2a and SAPK4.</title>
        <authorList>
            <person name="Herbison C.E."/>
            <person name="Sayer D.C."/>
            <person name="Bellgard M."/>
            <person name="Allcock R.J.N."/>
            <person name="Christiansen F.T."/>
            <person name="Price P."/>
        </authorList>
    </citation>
    <scope>NUCLEOTIDE SEQUENCE [MRNA]</scope>
</reference>
<organism>
    <name type="scientific">Pan troglodytes</name>
    <name type="common">Chimpanzee</name>
    <dbReference type="NCBI Taxonomy" id="9598"/>
    <lineage>
        <taxon>Eukaryota</taxon>
        <taxon>Metazoa</taxon>
        <taxon>Chordata</taxon>
        <taxon>Craniata</taxon>
        <taxon>Vertebrata</taxon>
        <taxon>Euteleostomi</taxon>
        <taxon>Mammalia</taxon>
        <taxon>Eutheria</taxon>
        <taxon>Euarchontoglires</taxon>
        <taxon>Primates</taxon>
        <taxon>Haplorrhini</taxon>
        <taxon>Catarrhini</taxon>
        <taxon>Hominidae</taxon>
        <taxon>Pan</taxon>
    </lineage>
</organism>